<dbReference type="EMBL" id="AF466694">
    <property type="protein sequence ID" value="AAQ05020.1"/>
    <property type="molecule type" value="mRNA"/>
</dbReference>
<dbReference type="RefSeq" id="NP_973718.1">
    <property type="nucleotide sequence ID" value="NM_201989.1"/>
</dbReference>
<dbReference type="SMR" id="Q71LX6"/>
<dbReference type="BioGRID" id="259825">
    <property type="interactions" value="2"/>
</dbReference>
<dbReference type="FunCoup" id="Q71LX6">
    <property type="interactions" value="36"/>
</dbReference>
<dbReference type="STRING" id="10116.ENSRNOP00000048045"/>
<dbReference type="GlyGen" id="Q71LX6">
    <property type="glycosylation" value="1 site"/>
</dbReference>
<dbReference type="iPTMnet" id="Q71LX6"/>
<dbReference type="PhosphoSitePlus" id="Q71LX6"/>
<dbReference type="PaxDb" id="10116-ENSRNOP00000048045"/>
<dbReference type="GeneID" id="311098"/>
<dbReference type="KEGG" id="rno:311098"/>
<dbReference type="UCSC" id="RGD:1302980">
    <property type="organism name" value="rat"/>
</dbReference>
<dbReference type="AGR" id="RGD:1302980"/>
<dbReference type="CTD" id="129446"/>
<dbReference type="RGD" id="1302980">
    <property type="gene designation" value="Xirp2"/>
</dbReference>
<dbReference type="eggNOG" id="ENOG502SF50">
    <property type="taxonomic scope" value="Eukaryota"/>
</dbReference>
<dbReference type="InParanoid" id="Q71LX6"/>
<dbReference type="PhylomeDB" id="Q71LX6"/>
<dbReference type="PRO" id="PR:Q71LX6"/>
<dbReference type="Proteomes" id="UP000002494">
    <property type="component" value="Unplaced"/>
</dbReference>
<dbReference type="GO" id="GO:0005911">
    <property type="term" value="C:cell-cell junction"/>
    <property type="evidence" value="ECO:0000266"/>
    <property type="project" value="RGD"/>
</dbReference>
<dbReference type="GO" id="GO:0005925">
    <property type="term" value="C:focal adhesion"/>
    <property type="evidence" value="ECO:0000266"/>
    <property type="project" value="RGD"/>
</dbReference>
<dbReference type="GO" id="GO:0001725">
    <property type="term" value="C:stress fiber"/>
    <property type="evidence" value="ECO:0000266"/>
    <property type="project" value="RGD"/>
</dbReference>
<dbReference type="GO" id="GO:0030018">
    <property type="term" value="C:Z disc"/>
    <property type="evidence" value="ECO:0000266"/>
    <property type="project" value="RGD"/>
</dbReference>
<dbReference type="GO" id="GO:0051015">
    <property type="term" value="F:actin filament binding"/>
    <property type="evidence" value="ECO:0000266"/>
    <property type="project" value="RGD"/>
</dbReference>
<dbReference type="GO" id="GO:0051393">
    <property type="term" value="F:alpha-actinin binding"/>
    <property type="evidence" value="ECO:0000266"/>
    <property type="project" value="RGD"/>
</dbReference>
<dbReference type="GO" id="GO:0007015">
    <property type="term" value="P:actin filament organization"/>
    <property type="evidence" value="ECO:0000318"/>
    <property type="project" value="GO_Central"/>
</dbReference>
<dbReference type="GO" id="GO:0055008">
    <property type="term" value="P:cardiac muscle tissue morphogenesis"/>
    <property type="evidence" value="ECO:0000266"/>
    <property type="project" value="RGD"/>
</dbReference>
<dbReference type="GO" id="GO:0045216">
    <property type="term" value="P:cell-cell junction organization"/>
    <property type="evidence" value="ECO:0000266"/>
    <property type="project" value="RGD"/>
</dbReference>
<dbReference type="GO" id="GO:1903829">
    <property type="term" value="P:positive regulation of protein localization"/>
    <property type="evidence" value="ECO:0000266"/>
    <property type="project" value="RGD"/>
</dbReference>
<dbReference type="GO" id="GO:0110053">
    <property type="term" value="P:regulation of actin filament organization"/>
    <property type="evidence" value="ECO:0000250"/>
    <property type="project" value="UniProtKB"/>
</dbReference>
<dbReference type="GO" id="GO:0003281">
    <property type="term" value="P:ventricular septum development"/>
    <property type="evidence" value="ECO:0000266"/>
    <property type="project" value="RGD"/>
</dbReference>
<dbReference type="InterPro" id="IPR012510">
    <property type="entry name" value="Actin-binding_Xin_repeat"/>
</dbReference>
<dbReference type="InterPro" id="IPR030072">
    <property type="entry name" value="XIRP1/XIRP2"/>
</dbReference>
<dbReference type="PANTHER" id="PTHR22591">
    <property type="entry name" value="XIN"/>
    <property type="match status" value="1"/>
</dbReference>
<dbReference type="PANTHER" id="PTHR22591:SF1">
    <property type="entry name" value="XIN ACTIN-BINDING REPEAT-CONTAINING PROTEIN 2"/>
    <property type="match status" value="1"/>
</dbReference>
<dbReference type="Pfam" id="PF08043">
    <property type="entry name" value="Xin"/>
    <property type="match status" value="18"/>
</dbReference>
<dbReference type="PROSITE" id="PS51389">
    <property type="entry name" value="XIN"/>
    <property type="match status" value="28"/>
</dbReference>
<accession>Q71LX6</accession>
<protein>
    <recommendedName>
        <fullName evidence="6">Xin actin-binding repeat-containing protein 2</fullName>
    </recommendedName>
    <alternativeName>
        <fullName>Beta-xin</fullName>
    </alternativeName>
    <alternativeName>
        <fullName>Cardiomyopathy-associated protein 3</fullName>
    </alternativeName>
    <alternativeName>
        <fullName>L-NAME-induced actin cytoskeletal protein</fullName>
    </alternativeName>
</protein>
<organism>
    <name type="scientific">Rattus norvegicus</name>
    <name type="common">Rat</name>
    <dbReference type="NCBI Taxonomy" id="10116"/>
    <lineage>
        <taxon>Eukaryota</taxon>
        <taxon>Metazoa</taxon>
        <taxon>Chordata</taxon>
        <taxon>Craniata</taxon>
        <taxon>Vertebrata</taxon>
        <taxon>Euteleostomi</taxon>
        <taxon>Mammalia</taxon>
        <taxon>Eutheria</taxon>
        <taxon>Euarchontoglires</taxon>
        <taxon>Glires</taxon>
        <taxon>Rodentia</taxon>
        <taxon>Myomorpha</taxon>
        <taxon>Muroidea</taxon>
        <taxon>Muridae</taxon>
        <taxon>Murinae</taxon>
        <taxon>Rattus</taxon>
    </lineage>
</organism>
<sequence>MARYQAAVSRGDTRSFSANVMEESDLCTVPGGLAKMKRQFEKDEMTSTCNAFSEYQYQHESRSEQEAIHNRQEIRRNEEEVSKGHRTDVFKAEMMSHLEKHTEETNQASQFRQYVQETVIDTPEDEEIPKVSTKILKEQFEKTAQENFLYSDKETTTPAKCIKIENDSEETLKPSSAMGTSSYTSARQSKETSTSSYSNHSLTSTILAQEKGTPSGKMEEFPPPPPDVFQTPMDVTAFSQSPEFPSPPRRLPMPRDVYSKQRNLYELNRLYRHIHPELRKNLEKDYISEVSEIVSSHINSGNSISAGVQQARYVFENTNDSSQKDLSSERENLEWDEILKGEVQSIRWIFENQPLDSINQGFTDEAYTSKGIADQELIAGGDVKYTTWMFETQPIDALGVPSAGTEENTEKIPELAKGDVCTARWMFETRPLDSMNKMHEWEDETASTFIKDITGGDVKTVRYMFETQQLDQLGQLHSVDEMNLLQLRSELKEIKGNVKRSIKCFETQPLYVIRDGSGQMLEIKTVQREDIEKGDVRTARWMFETQPLDTIKQDITEIKVVRGISMEENVKGEVGRARWLFETQPLEKIKEESGEAVLKTEAVVGIDVSKKCWMFETQPLDTLKQSPDTESVSPEERIGGDVKTTKHLLETLPIEALKDSPDVGKLQKITASEEEKGDVKHQKWVFETQRLEDIREDKKEYTQTVKLEAVDRGHVKNYTHIFESNNLIKVDASHQIEVEGVTRGTVELNKSLFETTPLYAIQDHLGKYHQVKTVQQEEIVRGDVRSCRWLFETRPIDQFDESLHKFQIIRGISAQEIQAGNVKSARWLFETQPLDSIKYFSNVEETDSKTEQSTDIVKGDVKTCKWLFETQPMESLYEKASLMTNSEDIHKGDVRTCMWLFETQPLDAIKNDSEATVKLQTVKQEEIQGGDVRTACLLFETENLDNIQGGEGKETKPVEMDIESGDVSGMKYKFENQSLDSISCSSENVLNKIKTLKIEDIQKGNVLNCRWLFENQPIDMIKENQEGDGLVKTVTDIQGGDVRKGCFIFETFSLDEIKDESDVISTRQTNTEEVIKGDVKSYKMLFETQPLYAIQDQEGFYHEVTTVKKEETIHGDVRGTRWLFETKPLDSINASEDVYIIKSVTQEDIQKGDVSSVRYRFETQPLDMISDKSHNIMPTIDHIQGGNVQMNKQLFESEGGDKKNYVRTVSINEIQKGNVKTSTWLFETHSIDELGEVSTYENIKTVTQEDVQKGDVKQAVWLFENQTLDSIKELDESDTKITKEEIPPSDVKTTTWLFETTPIHEFNETRIEKEEIIGKSIKETLEDLYSQRVVEAPGIIIEADEVGDVRMAKYKLMNQRTPEIQKEEVIRADLGNIMMNLLSQRDCTKKEIFISEEEKGNVNFTKTQLLNRSMEFHAEKEEIVRGDVKQAIQKLFSEERCAKRGILIQEDEKGDVNMTIYCLLHENAGDKTKREDILGGDVRRTIHNLLSSASNDKISERTKIDASERGNVQFFTTCIETGALDYLKQLQTGSNETLTARKQEGEEEIIGGDVEGTKFLLKKRQSSIERTVSETDIIPGDVRNTVKVFMTEPQSASFKTAKEEIVKGDLKSTLNSLNQAMNQKVVAKTEDIMKDDKAAILKSLKESGGRQKEHKQSASISSDIGQAIECLEKATNTRTEILKKELILDDLKTSLRSLKEEQYSFKEVGKQGMVKDVLGFSERQELGIHPAAVQREKKSLLQPVPGPCEPAIRQQAGPGPLDEATQKSCHRSLTEERTEANLPKAPKGTVKIVIDREQNNDALEKSLRKMSNSEHRAMKNVLDMGDRRGVWTESKECLCSDDHMSKYVSASMSRKKSLKTKESENVRESKDDVSSTQSVDKTFRKQQTQNCELGKDHQKSQFQDSYAKNQKNTQNISMSAETQSYRPDPTQHPVSNPAGETLEMTRDFQKQALIRQEKQNSNKDMRKNDMGLQPLPVGKDAHSAPGVTVSGKNHKRTQAPDKKQRIDVCLESQDFLMKTNTSKELKMAMERSFNPVNLYPDCGVKENEDALPPPSPPPPPPSNASSEIEFPLPPPPPIMLLPEKNEFPPSSPTEKSRAELESLPTLPLPPPPGDEKSDQECLPTSLPPPPPTAPSQPAHLLSSSVLEHHSEAFLQQYSRKETLDSHQLHSQAKILTGKSPPPTLPKPKLPERIKAKMSQDSPSGELERSLSDVEIKTTLSKDQKSSLVAESREHTEAKQEVFRKSLGRKQLSISSANSLSQTVPEIPAPKEKQTAPLVKSHSFPSGSEQQSPKPYMRKFKTPLMIAEEKYRQQREELEKQRRESSCHSIIKTETQHRSLSEKEKETELQKAAEAMSTPRKDSDFTRAQPNLEPKSKAVIASECSESQLSTASALTVATERLQHVLAASDDKLTLRREGTQNSSDTLQSKTACEINQSHKECRTEQTFEQHVEKLPFPQTKPISPSFKVKTIRLPALDHTLTETDLSSERRVKQSEIDVQTSTKEMNKEIKKTEVSTQCDNKQSVAEKYFQLPKTEKRVTVQMPKDYAAKSHQSKLQTVPKKHGGLGEFDRGNVLGREGKNQDSSMSSTKESRVIVERKQEHLQDQSVPRLVQQKIIGESLDSRVQNFQQTQTQTSRIEHKELSQPYSEKKCLRDKDKQQKQVSSNTDDSKQEITQKQSSFSSVRESQQDGEKCAINILEFLRKREELQQILSRVKQFEADSNKSGLKTFQTLLNIAPVWLISEEKREYGVRVAMENNLEKVKEEIIHIKTQAEEMLVHCEHVIRTAMMASQTGKQKDKPTNLNEMPLKVSNVNLSSHKGTEQKESKIVEEKLASRQVATHSEAATHNPAKTYQEAKGDDSKMAPPSLKTRPPSPTFITIESTARRAETSTKSELSQSPKNNSCVEPLPRRPMEHTSRLPRTSTSPSPPRSRSEQLVRLKDTTARLAKGTIPCSPGTPVPVVEKRSEVVMSPATLRRQIKIESRGGDSPPTITIPVSVNHHVVSGSFRESVDAQEAVKKTEKTETYVHKDKKNSVSSAMPETESYDAVEIIRKVEGPHLSEHRERFEATNQTVQMAEHFLNGHENEVNRWFREFENGPVFGAKTERRAYANGEINHNMKQESHTFCKEEFGLESSETANFTGFSYRHPREHRAKAPATQPRVHSEARALNEHFLSVDAFDSQIVESQVATSSSRSSEAGRSGFDFKHAPPTYEDVIAGHILDIADSPTNLRRNFQKTWQESERVFKSVGYETSDAHATEMSRAFQEELAFLSETVGPRQGNLHNLSKDGLSNGVPRSRPAEFS</sequence>
<gene>
    <name evidence="7" type="primary">Xirp2</name>
    <name evidence="2" type="synonym">Cmya3</name>
    <name type="synonym">Xin2</name>
</gene>
<feature type="chain" id="PRO_0000316989" description="Xin actin-binding repeat-containing protein 2">
    <location>
        <begin position="1"/>
        <end position="3302"/>
    </location>
</feature>
<feature type="repeat" description="Xin 1">
    <location>
        <begin position="306"/>
        <end position="321"/>
    </location>
</feature>
<feature type="repeat" description="Xin 2">
    <location>
        <begin position="341"/>
        <end position="356"/>
    </location>
</feature>
<feature type="repeat" description="Xin 3">
    <location>
        <begin position="381"/>
        <end position="396"/>
    </location>
</feature>
<feature type="repeat" description="Xin 4">
    <location>
        <begin position="418"/>
        <end position="433"/>
    </location>
</feature>
<feature type="repeat" description="Xin 5">
    <location>
        <begin position="456"/>
        <end position="471"/>
    </location>
</feature>
<feature type="repeat" description="Xin 6">
    <location>
        <begin position="496"/>
        <end position="511"/>
    </location>
</feature>
<feature type="repeat" description="Xin 7">
    <location>
        <begin position="534"/>
        <end position="549"/>
    </location>
</feature>
<feature type="repeat" description="Xin 8">
    <location>
        <begin position="572"/>
        <end position="587"/>
    </location>
</feature>
<feature type="repeat" description="Xin 9">
    <location>
        <begin position="606"/>
        <end position="621"/>
    </location>
</feature>
<feature type="repeat" description="Xin 10">
    <location>
        <begin position="640"/>
        <end position="655"/>
    </location>
</feature>
<feature type="repeat" description="Xin 11">
    <location>
        <begin position="677"/>
        <end position="692"/>
    </location>
</feature>
<feature type="repeat" description="Xin 12">
    <location>
        <begin position="713"/>
        <end position="728"/>
    </location>
</feature>
<feature type="repeat" description="Xin 13">
    <location>
        <begin position="744"/>
        <end position="759"/>
    </location>
</feature>
<feature type="repeat" description="Xin 14">
    <location>
        <begin position="782"/>
        <end position="797"/>
    </location>
</feature>
<feature type="repeat" description="Xin 15">
    <location>
        <begin position="820"/>
        <end position="835"/>
    </location>
</feature>
<feature type="repeat" description="Xin 16">
    <location>
        <begin position="859"/>
        <end position="874"/>
    </location>
</feature>
<feature type="repeat" description="Xin 17">
    <location>
        <begin position="892"/>
        <end position="907"/>
    </location>
</feature>
<feature type="repeat" description="Xin 18">
    <location>
        <begin position="930"/>
        <end position="945"/>
    </location>
</feature>
<feature type="repeat" description="Xin 19">
    <location>
        <begin position="965"/>
        <end position="980"/>
    </location>
</feature>
<feature type="repeat" description="Xin 20">
    <location>
        <begin position="1004"/>
        <end position="1019"/>
    </location>
</feature>
<feature type="repeat" description="Xin 21">
    <location>
        <begin position="1040"/>
        <end position="1055"/>
    </location>
</feature>
<feature type="repeat" description="Xin 22">
    <location>
        <begin position="1077"/>
        <end position="1092"/>
    </location>
</feature>
<feature type="repeat" description="Xin 23">
    <location>
        <begin position="1115"/>
        <end position="1130"/>
    </location>
</feature>
<feature type="repeat" description="Xin 24">
    <location>
        <begin position="1152"/>
        <end position="1167"/>
    </location>
</feature>
<feature type="repeat" description="Xin 25">
    <location>
        <begin position="1186"/>
        <end position="1201"/>
    </location>
</feature>
<feature type="repeat" description="Xin 26">
    <location>
        <begin position="1217"/>
        <end position="1232"/>
    </location>
</feature>
<feature type="repeat" description="Xin 27">
    <location>
        <begin position="1254"/>
        <end position="1269"/>
    </location>
</feature>
<feature type="repeat" description="Xin 28">
    <location>
        <begin position="1289"/>
        <end position="1304"/>
    </location>
</feature>
<feature type="region of interest" description="Disordered" evidence="5">
    <location>
        <begin position="166"/>
        <end position="204"/>
    </location>
</feature>
<feature type="region of interest" description="Disordered" evidence="5">
    <location>
        <begin position="1848"/>
        <end position="1882"/>
    </location>
</feature>
<feature type="region of interest" description="Disordered" evidence="5">
    <location>
        <begin position="1920"/>
        <end position="1939"/>
    </location>
</feature>
<feature type="region of interest" description="Disordered" evidence="5">
    <location>
        <begin position="1957"/>
        <end position="2002"/>
    </location>
</feature>
<feature type="region of interest" description="Disordered" evidence="5">
    <location>
        <begin position="2039"/>
        <end position="2296"/>
    </location>
</feature>
<feature type="region of interest" description="Interacts with NEBL" evidence="1">
    <location>
        <begin position="2181"/>
        <end position="2186"/>
    </location>
</feature>
<feature type="region of interest" description="Disordered" evidence="5">
    <location>
        <begin position="2311"/>
        <end position="2378"/>
    </location>
</feature>
<feature type="region of interest" description="Disordered" evidence="5">
    <location>
        <begin position="2546"/>
        <end position="2593"/>
    </location>
</feature>
<feature type="region of interest" description="Disordered" evidence="5">
    <location>
        <begin position="2626"/>
        <end position="2687"/>
    </location>
</feature>
<feature type="region of interest" description="Disordered" evidence="5">
    <location>
        <begin position="2835"/>
        <end position="2934"/>
    </location>
</feature>
<feature type="region of interest" description="Disordered" evidence="5">
    <location>
        <begin position="3278"/>
        <end position="3302"/>
    </location>
</feature>
<feature type="coiled-coil region" evidence="3">
    <location>
        <begin position="2303"/>
        <end position="2328"/>
    </location>
</feature>
<feature type="coiled-coil region" evidence="3">
    <location>
        <begin position="2696"/>
        <end position="2724"/>
    </location>
</feature>
<feature type="coiled-coil region" evidence="3">
    <location>
        <begin position="2751"/>
        <end position="2777"/>
    </location>
</feature>
<feature type="compositionally biased region" description="Polar residues" evidence="5">
    <location>
        <begin position="173"/>
        <end position="187"/>
    </location>
</feature>
<feature type="compositionally biased region" description="Low complexity" evidence="5">
    <location>
        <begin position="191"/>
        <end position="204"/>
    </location>
</feature>
<feature type="compositionally biased region" description="Basic and acidic residues" evidence="5">
    <location>
        <begin position="1859"/>
        <end position="1873"/>
    </location>
</feature>
<feature type="compositionally biased region" description="Basic and acidic residues" evidence="5">
    <location>
        <begin position="1957"/>
        <end position="1969"/>
    </location>
</feature>
<feature type="compositionally biased region" description="Pro residues" evidence="5">
    <location>
        <begin position="2051"/>
        <end position="2062"/>
    </location>
</feature>
<feature type="compositionally biased region" description="Pro residues" evidence="5">
    <location>
        <begin position="2125"/>
        <end position="2134"/>
    </location>
</feature>
<feature type="compositionally biased region" description="Low complexity" evidence="5">
    <location>
        <begin position="2135"/>
        <end position="2145"/>
    </location>
</feature>
<feature type="compositionally biased region" description="Basic and acidic residues" evidence="5">
    <location>
        <begin position="2158"/>
        <end position="2167"/>
    </location>
</feature>
<feature type="compositionally biased region" description="Basic and acidic residues" evidence="5">
    <location>
        <begin position="2205"/>
        <end position="2243"/>
    </location>
</feature>
<feature type="compositionally biased region" description="Polar residues" evidence="5">
    <location>
        <begin position="2251"/>
        <end position="2263"/>
    </location>
</feature>
<feature type="compositionally biased region" description="Polar residues" evidence="5">
    <location>
        <begin position="2282"/>
        <end position="2292"/>
    </location>
</feature>
<feature type="compositionally biased region" description="Basic and acidic residues" evidence="5">
    <location>
        <begin position="2311"/>
        <end position="2325"/>
    </location>
</feature>
<feature type="compositionally biased region" description="Basic and acidic residues" evidence="5">
    <location>
        <begin position="2333"/>
        <end position="2350"/>
    </location>
</feature>
<feature type="compositionally biased region" description="Polar residues" evidence="5">
    <location>
        <begin position="2626"/>
        <end position="2635"/>
    </location>
</feature>
<feature type="compositionally biased region" description="Basic and acidic residues" evidence="5">
    <location>
        <begin position="2636"/>
        <end position="2659"/>
    </location>
</feature>
<feature type="compositionally biased region" description="Polar residues" evidence="5">
    <location>
        <begin position="2674"/>
        <end position="2685"/>
    </location>
</feature>
<feature type="compositionally biased region" description="Polar residues" evidence="5">
    <location>
        <begin position="2836"/>
        <end position="2850"/>
    </location>
</feature>
<feature type="compositionally biased region" description="Polar residues" evidence="5">
    <location>
        <begin position="2891"/>
        <end position="2903"/>
    </location>
</feature>
<feature type="compositionally biased region" description="Basic and acidic residues" evidence="5">
    <location>
        <begin position="2907"/>
        <end position="2916"/>
    </location>
</feature>
<feature type="modified residue" description="Phosphoserine" evidence="9">
    <location>
        <position position="565"/>
    </location>
</feature>
<feature type="modified residue" description="Phosphoserine" evidence="9">
    <location>
        <position position="633"/>
    </location>
</feature>
<feature type="modified residue" description="Phosphoserine" evidence="2">
    <location>
        <position position="813"/>
    </location>
</feature>
<feature type="modified residue" description="Phosphoserine" evidence="9">
    <location>
        <position position="1210"/>
    </location>
</feature>
<feature type="modified residue" description="Phosphoserine" evidence="9">
    <location>
        <position position="1573"/>
    </location>
</feature>
<feature type="modified residue" description="Phosphothreonine" evidence="8">
    <location>
        <position position="1930"/>
    </location>
</feature>
<feature type="modified residue" description="Phosphoserine" evidence="8">
    <location>
        <position position="1935"/>
    </location>
</feature>
<feature type="modified residue" description="Phosphoserine" evidence="2">
    <location>
        <position position="2158"/>
    </location>
</feature>
<feature type="modified residue" description="Phosphoserine" evidence="9">
    <location>
        <position position="2198"/>
    </location>
</feature>
<feature type="modified residue" description="Phosphoserine" evidence="9">
    <location>
        <position position="2211"/>
    </location>
</feature>
<feature type="modified residue" description="Phosphoserine" evidence="9">
    <location>
        <position position="2252"/>
    </location>
</feature>
<feature type="modified residue" description="Phosphoserine" evidence="2">
    <location>
        <position position="2987"/>
    </location>
</feature>
<feature type="modified residue" description="Phosphoserine" evidence="9">
    <location>
        <position position="3225"/>
    </location>
</feature>
<keyword id="KW-0009">Actin-binding</keyword>
<keyword id="KW-0965">Cell junction</keyword>
<keyword id="KW-0175">Coiled coil</keyword>
<keyword id="KW-0597">Phosphoprotein</keyword>
<keyword id="KW-1185">Reference proteome</keyword>
<keyword id="KW-0677">Repeat</keyword>
<proteinExistence type="evidence at protein level"/>
<name>XIRP2_RAT</name>
<reference key="1">
    <citation type="submission" date="2002-01" db="EMBL/GenBank/DDBJ databases">
        <title>Identification of a novel gene involved in the pathogenesis of cardiac hypertrophy in rats.</title>
        <authorList>
            <person name="Inoue S."/>
            <person name="Egashira K."/>
            <person name="Koike G."/>
            <person name="Takeshita A."/>
        </authorList>
    </citation>
    <scope>NUCLEOTIDE SEQUENCE [MRNA]</scope>
    <source>
        <strain>Wistar Kyoto</strain>
    </source>
</reference>
<reference key="2">
    <citation type="journal article" date="2006" name="Proc. Natl. Acad. Sci. U.S.A.">
        <title>Quantitative phosphoproteomics of vasopressin-sensitive renal cells: regulation of aquaporin-2 phosphorylation at two sites.</title>
        <authorList>
            <person name="Hoffert J.D."/>
            <person name="Pisitkun T."/>
            <person name="Wang G."/>
            <person name="Shen R.-F."/>
            <person name="Knepper M.A."/>
        </authorList>
    </citation>
    <scope>PHOSPHORYLATION [LARGE SCALE ANALYSIS] AT THR-1930 AND SER-1935</scope>
    <scope>IDENTIFICATION BY MASS SPECTROMETRY [LARGE SCALE ANALYSIS]</scope>
</reference>
<reference key="3">
    <citation type="journal article" date="2012" name="Nat. Commun.">
        <title>Quantitative maps of protein phosphorylation sites across 14 different rat organs and tissues.</title>
        <authorList>
            <person name="Lundby A."/>
            <person name="Secher A."/>
            <person name="Lage K."/>
            <person name="Nordsborg N.B."/>
            <person name="Dmytriyev A."/>
            <person name="Lundby C."/>
            <person name="Olsen J.V."/>
        </authorList>
    </citation>
    <scope>PHOSPHORYLATION [LARGE SCALE ANALYSIS] AT SER-565; SER-633; SER-1210; SER-1573; SER-2198; SER-2211; SER-2252 AND SER-3225</scope>
    <scope>IDENTIFICATION BY MASS SPECTROMETRY [LARGE SCALE ANALYSIS]</scope>
</reference>
<evidence type="ECO:0000250" key="1">
    <source>
        <dbReference type="UniProtKB" id="A4UGR9"/>
    </source>
</evidence>
<evidence type="ECO:0000250" key="2">
    <source>
        <dbReference type="UniProtKB" id="Q4U4S6"/>
    </source>
</evidence>
<evidence type="ECO:0000255" key="3"/>
<evidence type="ECO:0000255" key="4">
    <source>
        <dbReference type="PROSITE-ProRule" id="PRU00721"/>
    </source>
</evidence>
<evidence type="ECO:0000256" key="5">
    <source>
        <dbReference type="SAM" id="MobiDB-lite"/>
    </source>
</evidence>
<evidence type="ECO:0000305" key="6"/>
<evidence type="ECO:0000312" key="7">
    <source>
        <dbReference type="RGD" id="1302980"/>
    </source>
</evidence>
<evidence type="ECO:0007744" key="8">
    <source>
    </source>
</evidence>
<evidence type="ECO:0007744" key="9">
    <source>
    </source>
</evidence>
<comment type="function">
    <text evidence="1 2">Protects actin filaments from depolymerization (By similarity). Required for correct morphology of cell membranes and maturation of intercalated disks of cardiomyocytes via facilitating localization of XIRP1 and CDH2 to the termini of aligned mature cardiomyocytes (By similarity). Thereby required for correct postnatal heart development and growth regulation that is crucial for overall heart morphology and diastolic function (By similarity). Required for normal electrical conduction in the heart including formation of the infranodal ventricular conduction system and normal action potential configuration, as a result of its interaction with the cardiac ion channel components Scn5a/Nav1.5 and Kcna5/Kv1.5 (By similarity). Required for regular actin filament spacing of the paracrystalline array in both inner and outer hair cells of the cochlea, thereby required for maintenance of stereocilia morphology (By similarity).</text>
</comment>
<comment type="subunit">
    <text evidence="1 2">Interacts with ACTN2 (By similarity). Interacts with F-actin (By similarity). Interacts with NEBL (via SH3 domain) (By similarity). Interacts with Kcna5/Kv1.5 and Scn5a/Nav1.5; the interactions are required for normal action potential configuration in the heart (By similarity).</text>
</comment>
<comment type="subcellular location">
    <subcellularLocation>
        <location evidence="2">Cell junction</location>
    </subcellularLocation>
    <text evidence="2">Colocalizes with actin stress fibers.</text>
</comment>
<comment type="domain">
    <text evidence="1">Xin repeats bind F-actin.</text>
</comment>
<comment type="similarity">
    <text evidence="4">Belongs to the Xin family.</text>
</comment>